<evidence type="ECO:0000255" key="1">
    <source>
        <dbReference type="HAMAP-Rule" id="MF_00563"/>
    </source>
</evidence>
<reference key="1">
    <citation type="journal article" date="2001" name="DNA Res.">
        <title>Complete genomic sequence of the filamentous nitrogen-fixing cyanobacterium Anabaena sp. strain PCC 7120.</title>
        <authorList>
            <person name="Kaneko T."/>
            <person name="Nakamura Y."/>
            <person name="Wolk C.P."/>
            <person name="Kuritz T."/>
            <person name="Sasamoto S."/>
            <person name="Watanabe A."/>
            <person name="Iriguchi M."/>
            <person name="Ishikawa A."/>
            <person name="Kawashima K."/>
            <person name="Kimura T."/>
            <person name="Kishida Y."/>
            <person name="Kohara M."/>
            <person name="Matsumoto M."/>
            <person name="Matsuno A."/>
            <person name="Muraki A."/>
            <person name="Nakazaki N."/>
            <person name="Shimpo S."/>
            <person name="Sugimoto M."/>
            <person name="Takazawa M."/>
            <person name="Yamada M."/>
            <person name="Yasuda M."/>
            <person name="Tabata S."/>
        </authorList>
    </citation>
    <scope>NUCLEOTIDE SEQUENCE [LARGE SCALE GENOMIC DNA]</scope>
    <source>
        <strain>PCC 7120 / SAG 25.82 / UTEX 2576</strain>
    </source>
</reference>
<protein>
    <recommendedName>
        <fullName evidence="1">Adenosylhomocysteinase</fullName>
        <ecNumber evidence="1">3.13.2.1</ecNumber>
    </recommendedName>
    <alternativeName>
        <fullName evidence="1">S-adenosyl-L-homocysteine hydrolase</fullName>
        <shortName evidence="1">AdoHcyase</shortName>
    </alternativeName>
</protein>
<organism>
    <name type="scientific">Nostoc sp. (strain PCC 7120 / SAG 25.82 / UTEX 2576)</name>
    <dbReference type="NCBI Taxonomy" id="103690"/>
    <lineage>
        <taxon>Bacteria</taxon>
        <taxon>Bacillati</taxon>
        <taxon>Cyanobacteriota</taxon>
        <taxon>Cyanophyceae</taxon>
        <taxon>Nostocales</taxon>
        <taxon>Nostocaceae</taxon>
        <taxon>Nostoc</taxon>
    </lineage>
</organism>
<name>SAHH_NOSS1</name>
<proteinExistence type="inferred from homology"/>
<accession>Q8YX05</accession>
<keyword id="KW-0963">Cytoplasm</keyword>
<keyword id="KW-0378">Hydrolase</keyword>
<keyword id="KW-0520">NAD</keyword>
<keyword id="KW-0554">One-carbon metabolism</keyword>
<keyword id="KW-1185">Reference proteome</keyword>
<feature type="chain" id="PRO_0000116940" description="Adenosylhomocysteinase">
    <location>
        <begin position="1"/>
        <end position="425"/>
    </location>
</feature>
<feature type="binding site" evidence="1">
    <location>
        <position position="60"/>
    </location>
    <ligand>
        <name>substrate</name>
    </ligand>
</feature>
<feature type="binding site" evidence="1">
    <location>
        <position position="132"/>
    </location>
    <ligand>
        <name>substrate</name>
    </ligand>
</feature>
<feature type="binding site" evidence="1">
    <location>
        <position position="157"/>
    </location>
    <ligand>
        <name>substrate</name>
    </ligand>
</feature>
<feature type="binding site" evidence="1">
    <location>
        <begin position="158"/>
        <end position="160"/>
    </location>
    <ligand>
        <name>NAD(+)</name>
        <dbReference type="ChEBI" id="CHEBI:57540"/>
    </ligand>
</feature>
<feature type="binding site" evidence="1">
    <location>
        <position position="187"/>
    </location>
    <ligand>
        <name>substrate</name>
    </ligand>
</feature>
<feature type="binding site" evidence="1">
    <location>
        <position position="191"/>
    </location>
    <ligand>
        <name>substrate</name>
    </ligand>
</feature>
<feature type="binding site" evidence="1">
    <location>
        <position position="192"/>
    </location>
    <ligand>
        <name>NAD(+)</name>
        <dbReference type="ChEBI" id="CHEBI:57540"/>
    </ligand>
</feature>
<feature type="binding site" evidence="1">
    <location>
        <begin position="221"/>
        <end position="226"/>
    </location>
    <ligand>
        <name>NAD(+)</name>
        <dbReference type="ChEBI" id="CHEBI:57540"/>
    </ligand>
</feature>
<feature type="binding site" evidence="1">
    <location>
        <position position="244"/>
    </location>
    <ligand>
        <name>NAD(+)</name>
        <dbReference type="ChEBI" id="CHEBI:57540"/>
    </ligand>
</feature>
<feature type="binding site" evidence="1">
    <location>
        <position position="279"/>
    </location>
    <ligand>
        <name>NAD(+)</name>
        <dbReference type="ChEBI" id="CHEBI:57540"/>
    </ligand>
</feature>
<feature type="binding site" evidence="1">
    <location>
        <begin position="300"/>
        <end position="302"/>
    </location>
    <ligand>
        <name>NAD(+)</name>
        <dbReference type="ChEBI" id="CHEBI:57540"/>
    </ligand>
</feature>
<feature type="binding site" evidence="1">
    <location>
        <position position="347"/>
    </location>
    <ligand>
        <name>NAD(+)</name>
        <dbReference type="ChEBI" id="CHEBI:57540"/>
    </ligand>
</feature>
<dbReference type="EC" id="3.13.2.1" evidence="1"/>
<dbReference type="EMBL" id="BA000019">
    <property type="protein sequence ID" value="BAB73371.1"/>
    <property type="molecule type" value="Genomic_DNA"/>
</dbReference>
<dbReference type="PIR" id="AC1983">
    <property type="entry name" value="AC1983"/>
</dbReference>
<dbReference type="RefSeq" id="WP_010995586.1">
    <property type="nucleotide sequence ID" value="NZ_RSCN01000040.1"/>
</dbReference>
<dbReference type="SMR" id="Q8YX05"/>
<dbReference type="STRING" id="103690.gene:10493429"/>
<dbReference type="KEGG" id="ana:alr1414"/>
<dbReference type="eggNOG" id="COG0499">
    <property type="taxonomic scope" value="Bacteria"/>
</dbReference>
<dbReference type="OrthoDB" id="9802717at2"/>
<dbReference type="UniPathway" id="UPA00314">
    <property type="reaction ID" value="UER00076"/>
</dbReference>
<dbReference type="Proteomes" id="UP000002483">
    <property type="component" value="Chromosome"/>
</dbReference>
<dbReference type="GO" id="GO:0005829">
    <property type="term" value="C:cytosol"/>
    <property type="evidence" value="ECO:0007669"/>
    <property type="project" value="TreeGrafter"/>
</dbReference>
<dbReference type="GO" id="GO:0004013">
    <property type="term" value="F:adenosylhomocysteinase activity"/>
    <property type="evidence" value="ECO:0007669"/>
    <property type="project" value="UniProtKB-UniRule"/>
</dbReference>
<dbReference type="GO" id="GO:0071269">
    <property type="term" value="P:L-homocysteine biosynthetic process"/>
    <property type="evidence" value="ECO:0007669"/>
    <property type="project" value="UniProtKB-UniRule"/>
</dbReference>
<dbReference type="GO" id="GO:0006730">
    <property type="term" value="P:one-carbon metabolic process"/>
    <property type="evidence" value="ECO:0007669"/>
    <property type="project" value="UniProtKB-KW"/>
</dbReference>
<dbReference type="GO" id="GO:0033353">
    <property type="term" value="P:S-adenosylmethionine cycle"/>
    <property type="evidence" value="ECO:0007669"/>
    <property type="project" value="TreeGrafter"/>
</dbReference>
<dbReference type="CDD" id="cd00401">
    <property type="entry name" value="SAHH"/>
    <property type="match status" value="1"/>
</dbReference>
<dbReference type="FunFam" id="3.40.50.720:FF:000004">
    <property type="entry name" value="Adenosylhomocysteinase"/>
    <property type="match status" value="1"/>
</dbReference>
<dbReference type="Gene3D" id="3.40.50.1480">
    <property type="entry name" value="Adenosylhomocysteinase-like"/>
    <property type="match status" value="1"/>
</dbReference>
<dbReference type="Gene3D" id="3.40.50.720">
    <property type="entry name" value="NAD(P)-binding Rossmann-like Domain"/>
    <property type="match status" value="1"/>
</dbReference>
<dbReference type="HAMAP" id="MF_00563">
    <property type="entry name" value="AdoHcyase"/>
    <property type="match status" value="1"/>
</dbReference>
<dbReference type="InterPro" id="IPR042172">
    <property type="entry name" value="Adenosylhomocyst_ase-like_sf"/>
</dbReference>
<dbReference type="InterPro" id="IPR000043">
    <property type="entry name" value="Adenosylhomocysteinase-like"/>
</dbReference>
<dbReference type="InterPro" id="IPR015878">
    <property type="entry name" value="Ado_hCys_hydrolase_NAD-bd"/>
</dbReference>
<dbReference type="InterPro" id="IPR036291">
    <property type="entry name" value="NAD(P)-bd_dom_sf"/>
</dbReference>
<dbReference type="InterPro" id="IPR020082">
    <property type="entry name" value="S-Ado-L-homoCys_hydrolase_CS"/>
</dbReference>
<dbReference type="NCBIfam" id="TIGR00936">
    <property type="entry name" value="ahcY"/>
    <property type="match status" value="1"/>
</dbReference>
<dbReference type="NCBIfam" id="NF004005">
    <property type="entry name" value="PRK05476.2-3"/>
    <property type="match status" value="1"/>
</dbReference>
<dbReference type="PANTHER" id="PTHR23420">
    <property type="entry name" value="ADENOSYLHOMOCYSTEINASE"/>
    <property type="match status" value="1"/>
</dbReference>
<dbReference type="PANTHER" id="PTHR23420:SF0">
    <property type="entry name" value="ADENOSYLHOMOCYSTEINASE"/>
    <property type="match status" value="1"/>
</dbReference>
<dbReference type="Pfam" id="PF05221">
    <property type="entry name" value="AdoHcyase"/>
    <property type="match status" value="2"/>
</dbReference>
<dbReference type="Pfam" id="PF00670">
    <property type="entry name" value="AdoHcyase_NAD"/>
    <property type="match status" value="1"/>
</dbReference>
<dbReference type="PIRSF" id="PIRSF001109">
    <property type="entry name" value="Ad_hcy_hydrolase"/>
    <property type="match status" value="1"/>
</dbReference>
<dbReference type="SMART" id="SM00996">
    <property type="entry name" value="AdoHcyase"/>
    <property type="match status" value="1"/>
</dbReference>
<dbReference type="SMART" id="SM00997">
    <property type="entry name" value="AdoHcyase_NAD"/>
    <property type="match status" value="1"/>
</dbReference>
<dbReference type="SUPFAM" id="SSF52283">
    <property type="entry name" value="Formate/glycerate dehydrogenase catalytic domain-like"/>
    <property type="match status" value="1"/>
</dbReference>
<dbReference type="SUPFAM" id="SSF51735">
    <property type="entry name" value="NAD(P)-binding Rossmann-fold domains"/>
    <property type="match status" value="1"/>
</dbReference>
<dbReference type="PROSITE" id="PS00738">
    <property type="entry name" value="ADOHCYASE_1"/>
    <property type="match status" value="1"/>
</dbReference>
<dbReference type="PROSITE" id="PS00739">
    <property type="entry name" value="ADOHCYASE_2"/>
    <property type="match status" value="1"/>
</dbReference>
<comment type="function">
    <text evidence="1">May play a key role in the regulation of the intracellular concentration of adenosylhomocysteine.</text>
</comment>
<comment type="catalytic activity">
    <reaction evidence="1">
        <text>S-adenosyl-L-homocysteine + H2O = L-homocysteine + adenosine</text>
        <dbReference type="Rhea" id="RHEA:21708"/>
        <dbReference type="ChEBI" id="CHEBI:15377"/>
        <dbReference type="ChEBI" id="CHEBI:16335"/>
        <dbReference type="ChEBI" id="CHEBI:57856"/>
        <dbReference type="ChEBI" id="CHEBI:58199"/>
        <dbReference type="EC" id="3.13.2.1"/>
    </reaction>
</comment>
<comment type="cofactor">
    <cofactor evidence="1">
        <name>NAD(+)</name>
        <dbReference type="ChEBI" id="CHEBI:57540"/>
    </cofactor>
    <text evidence="1">Binds 1 NAD(+) per subunit.</text>
</comment>
<comment type="pathway">
    <text evidence="1">Amino-acid biosynthesis; L-homocysteine biosynthesis; L-homocysteine from S-adenosyl-L-homocysteine: step 1/1.</text>
</comment>
<comment type="subcellular location">
    <subcellularLocation>
        <location evidence="1">Cytoplasm</location>
    </subcellularLocation>
</comment>
<comment type="similarity">
    <text evidence="1">Belongs to the adenosylhomocysteinase family.</text>
</comment>
<sequence>MTATSPRLKHEVKDLALAPLGRQRIEWAGREMPVLRQIRDRFAQEKPFAGLRLVACAHITTETAHLAIALKAGGADAVLIASNPLSTQDDVAASLVLDHEIPVFAQKGEDNATYNRHVQIALDHRPNIIIDDGSDVVATLVQERQHQIADLIGTTEETTTGIVRLRAMFKDGVLTFPAVNVNDADTKHFFDNRYGTGQSTLDGIIRATNILLAGKNVVVVGYGWCGKGTALRARGMGANVIVTEIDPIKAIEAVMDGFRVLPMAEAAPQGDIFITVTGNKHVVRGEHFDVMKDGAIVCNSGHFDLELDLKYLAANAKEIKEVRPFTEEYKLTNGKSVVVLGQGRLINLAAAEGHPSAVMDMSFANQALACEYLVKNKGKLAPGLHSIPVEVDQEIARLKLQAMGIYIDSLTPEQIEYINSWTSGT</sequence>
<gene>
    <name evidence="1" type="primary">ahcY</name>
    <name type="ordered locus">alr1414</name>
</gene>